<reference key="1">
    <citation type="journal article" date="2000" name="Nature">
        <title>The genome sequence of the plant pathogen Xylella fastidiosa.</title>
        <authorList>
            <person name="Simpson A.J.G."/>
            <person name="Reinach F.C."/>
            <person name="Arruda P."/>
            <person name="Abreu F.A."/>
            <person name="Acencio M."/>
            <person name="Alvarenga R."/>
            <person name="Alves L.M.C."/>
            <person name="Araya J.E."/>
            <person name="Baia G.S."/>
            <person name="Baptista C.S."/>
            <person name="Barros M.H."/>
            <person name="Bonaccorsi E.D."/>
            <person name="Bordin S."/>
            <person name="Bove J.M."/>
            <person name="Briones M.R.S."/>
            <person name="Bueno M.R.P."/>
            <person name="Camargo A.A."/>
            <person name="Camargo L.E.A."/>
            <person name="Carraro D.M."/>
            <person name="Carrer H."/>
            <person name="Colauto N.B."/>
            <person name="Colombo C."/>
            <person name="Costa F.F."/>
            <person name="Costa M.C.R."/>
            <person name="Costa-Neto C.M."/>
            <person name="Coutinho L.L."/>
            <person name="Cristofani M."/>
            <person name="Dias-Neto E."/>
            <person name="Docena C."/>
            <person name="El-Dorry H."/>
            <person name="Facincani A.P."/>
            <person name="Ferreira A.J.S."/>
            <person name="Ferreira V.C.A."/>
            <person name="Ferro J.A."/>
            <person name="Fraga J.S."/>
            <person name="Franca S.C."/>
            <person name="Franco M.C."/>
            <person name="Frohme M."/>
            <person name="Furlan L.R."/>
            <person name="Garnier M."/>
            <person name="Goldman G.H."/>
            <person name="Goldman M.H.S."/>
            <person name="Gomes S.L."/>
            <person name="Gruber A."/>
            <person name="Ho P.L."/>
            <person name="Hoheisel J.D."/>
            <person name="Junqueira M.L."/>
            <person name="Kemper E.L."/>
            <person name="Kitajima J.P."/>
            <person name="Krieger J.E."/>
            <person name="Kuramae E.E."/>
            <person name="Laigret F."/>
            <person name="Lambais M.R."/>
            <person name="Leite L.C.C."/>
            <person name="Lemos E.G.M."/>
            <person name="Lemos M.V.F."/>
            <person name="Lopes S.A."/>
            <person name="Lopes C.R."/>
            <person name="Machado J.A."/>
            <person name="Machado M.A."/>
            <person name="Madeira A.M.B.N."/>
            <person name="Madeira H.M.F."/>
            <person name="Marino C.L."/>
            <person name="Marques M.V."/>
            <person name="Martins E.A.L."/>
            <person name="Martins E.M.F."/>
            <person name="Matsukuma A.Y."/>
            <person name="Menck C.F.M."/>
            <person name="Miracca E.C."/>
            <person name="Miyaki C.Y."/>
            <person name="Monteiro-Vitorello C.B."/>
            <person name="Moon D.H."/>
            <person name="Nagai M.A."/>
            <person name="Nascimento A.L.T.O."/>
            <person name="Netto L.E.S."/>
            <person name="Nhani A. Jr."/>
            <person name="Nobrega F.G."/>
            <person name="Nunes L.R."/>
            <person name="Oliveira M.A."/>
            <person name="de Oliveira M.C."/>
            <person name="de Oliveira R.C."/>
            <person name="Palmieri D.A."/>
            <person name="Paris A."/>
            <person name="Peixoto B.R."/>
            <person name="Pereira G.A.G."/>
            <person name="Pereira H.A. Jr."/>
            <person name="Pesquero J.B."/>
            <person name="Quaggio R.B."/>
            <person name="Roberto P.G."/>
            <person name="Rodrigues V."/>
            <person name="de Rosa A.J.M."/>
            <person name="de Rosa V.E. Jr."/>
            <person name="de Sa R.G."/>
            <person name="Santelli R.V."/>
            <person name="Sawasaki H.E."/>
            <person name="da Silva A.C.R."/>
            <person name="da Silva A.M."/>
            <person name="da Silva F.R."/>
            <person name="Silva W.A. Jr."/>
            <person name="da Silveira J.F."/>
            <person name="Silvestri M.L.Z."/>
            <person name="Siqueira W.J."/>
            <person name="de Souza A.A."/>
            <person name="de Souza A.P."/>
            <person name="Terenzi M.F."/>
            <person name="Truffi D."/>
            <person name="Tsai S.M."/>
            <person name="Tsuhako M.H."/>
            <person name="Vallada H."/>
            <person name="Van Sluys M.A."/>
            <person name="Verjovski-Almeida S."/>
            <person name="Vettore A.L."/>
            <person name="Zago M.A."/>
            <person name="Zatz M."/>
            <person name="Meidanis J."/>
            <person name="Setubal J.C."/>
        </authorList>
    </citation>
    <scope>NUCLEOTIDE SEQUENCE [LARGE SCALE GENOMIC DNA]</scope>
    <source>
        <strain>9a5c</strain>
    </source>
</reference>
<name>MTIP_XYLFA</name>
<organism>
    <name type="scientific">Xylella fastidiosa (strain 9a5c)</name>
    <dbReference type="NCBI Taxonomy" id="160492"/>
    <lineage>
        <taxon>Bacteria</taxon>
        <taxon>Pseudomonadati</taxon>
        <taxon>Pseudomonadota</taxon>
        <taxon>Gammaproteobacteria</taxon>
        <taxon>Lysobacterales</taxon>
        <taxon>Lysobacteraceae</taxon>
        <taxon>Xylella</taxon>
    </lineage>
</organism>
<evidence type="ECO:0000255" key="1">
    <source>
        <dbReference type="HAMAP-Rule" id="MF_01963"/>
    </source>
</evidence>
<gene>
    <name type="ordered locus">XF_2353</name>
</gene>
<keyword id="KW-0328">Glycosyltransferase</keyword>
<keyword id="KW-0660">Purine salvage</keyword>
<keyword id="KW-0808">Transferase</keyword>
<protein>
    <recommendedName>
        <fullName evidence="1">Probable S-methyl-5'-thioinosine phosphorylase</fullName>
        <ecNumber evidence="1">2.4.2.44</ecNumber>
    </recommendedName>
    <alternativeName>
        <fullName evidence="1">5'-methylthioinosine phosphorylase</fullName>
        <shortName evidence="1">MTI phosphorylase</shortName>
        <shortName evidence="1">MTIP</shortName>
    </alternativeName>
</protein>
<proteinExistence type="inferred from homology"/>
<comment type="function">
    <text evidence="1">Catalyzes the reversible phosphorylation of S-methyl-5'-thioinosine (MTI) to hypoxanthine and 5-methylthioribose-1-phosphate. Involved in the breakdown of S-methyl-5'-thioadenosine (MTA), a major by-product of polyamine biosynthesis. Catabolism of (MTA) occurs via deamination to MTI and phosphorolysis to hypoxanthine.</text>
</comment>
<comment type="catalytic activity">
    <reaction evidence="1">
        <text>S-methyl-5'-thioinosine + phosphate = 5-(methylsulfanyl)-alpha-D-ribose 1-phosphate + hypoxanthine</text>
        <dbReference type="Rhea" id="RHEA:30643"/>
        <dbReference type="ChEBI" id="CHEBI:17368"/>
        <dbReference type="ChEBI" id="CHEBI:43474"/>
        <dbReference type="ChEBI" id="CHEBI:48595"/>
        <dbReference type="ChEBI" id="CHEBI:58533"/>
        <dbReference type="EC" id="2.4.2.44"/>
    </reaction>
</comment>
<comment type="pathway">
    <text evidence="1">Purine metabolism; purine nucleoside salvage.</text>
</comment>
<comment type="subunit">
    <text evidence="1">Homotrimer.</text>
</comment>
<comment type="miscellaneous">
    <text evidence="1">Although this enzyme belongs to the family of MTA phosphorylases based on sequence homology, it has been shown that conserved amino acid substitutions in the substrate binding pocket convert the substrate specificity of this enzyme from 6-aminopurines to 6-oxopurines.</text>
</comment>
<comment type="similarity">
    <text evidence="1">Belongs to the PNP/MTAP phosphorylase family. MTAP subfamily.</text>
</comment>
<accession>Q9PAZ2</accession>
<dbReference type="EC" id="2.4.2.44" evidence="1"/>
<dbReference type="EMBL" id="AE003849">
    <property type="protein sequence ID" value="AAF85152.1"/>
    <property type="molecule type" value="Genomic_DNA"/>
</dbReference>
<dbReference type="PIR" id="H82568">
    <property type="entry name" value="H82568"/>
</dbReference>
<dbReference type="SMR" id="Q9PAZ2"/>
<dbReference type="STRING" id="160492.XF_2353"/>
<dbReference type="KEGG" id="xfa:XF_2353"/>
<dbReference type="PATRIC" id="fig|160492.11.peg.2504"/>
<dbReference type="eggNOG" id="COG0005">
    <property type="taxonomic scope" value="Bacteria"/>
</dbReference>
<dbReference type="HOGENOM" id="CLU_054456_0_2_6"/>
<dbReference type="UniPathway" id="UPA00606"/>
<dbReference type="Proteomes" id="UP000000812">
    <property type="component" value="Chromosome"/>
</dbReference>
<dbReference type="GO" id="GO:0005829">
    <property type="term" value="C:cytosol"/>
    <property type="evidence" value="ECO:0007669"/>
    <property type="project" value="TreeGrafter"/>
</dbReference>
<dbReference type="GO" id="GO:0017061">
    <property type="term" value="F:S-methyl-5-thioadenosine phosphorylase activity"/>
    <property type="evidence" value="ECO:0007669"/>
    <property type="project" value="InterPro"/>
</dbReference>
<dbReference type="GO" id="GO:0019509">
    <property type="term" value="P:L-methionine salvage from methylthioadenosine"/>
    <property type="evidence" value="ECO:0007669"/>
    <property type="project" value="TreeGrafter"/>
</dbReference>
<dbReference type="GO" id="GO:0006166">
    <property type="term" value="P:purine ribonucleoside salvage"/>
    <property type="evidence" value="ECO:0007669"/>
    <property type="project" value="UniProtKB-UniRule"/>
</dbReference>
<dbReference type="CDD" id="cd09010">
    <property type="entry name" value="MTAP_SsMTAPII_like_MTIP"/>
    <property type="match status" value="1"/>
</dbReference>
<dbReference type="Gene3D" id="3.40.50.1580">
    <property type="entry name" value="Nucleoside phosphorylase domain"/>
    <property type="match status" value="1"/>
</dbReference>
<dbReference type="HAMAP" id="MF_01963">
    <property type="entry name" value="MTAP"/>
    <property type="match status" value="1"/>
</dbReference>
<dbReference type="InterPro" id="IPR010044">
    <property type="entry name" value="MTAP"/>
</dbReference>
<dbReference type="InterPro" id="IPR000845">
    <property type="entry name" value="Nucleoside_phosphorylase_d"/>
</dbReference>
<dbReference type="InterPro" id="IPR035994">
    <property type="entry name" value="Nucleoside_phosphorylase_sf"/>
</dbReference>
<dbReference type="InterPro" id="IPR018099">
    <property type="entry name" value="Purine_phosphorylase-2_CS"/>
</dbReference>
<dbReference type="NCBIfam" id="NF006599">
    <property type="entry name" value="PRK09136.1"/>
    <property type="match status" value="1"/>
</dbReference>
<dbReference type="PANTHER" id="PTHR42679">
    <property type="entry name" value="S-METHYL-5'-THIOADENOSINE PHOSPHORYLASE"/>
    <property type="match status" value="1"/>
</dbReference>
<dbReference type="PANTHER" id="PTHR42679:SF2">
    <property type="entry name" value="S-METHYL-5'-THIOADENOSINE PHOSPHORYLASE"/>
    <property type="match status" value="1"/>
</dbReference>
<dbReference type="Pfam" id="PF01048">
    <property type="entry name" value="PNP_UDP_1"/>
    <property type="match status" value="1"/>
</dbReference>
<dbReference type="SUPFAM" id="SSF53167">
    <property type="entry name" value="Purine and uridine phosphorylases"/>
    <property type="match status" value="1"/>
</dbReference>
<dbReference type="PROSITE" id="PS01240">
    <property type="entry name" value="PNP_MTAP_2"/>
    <property type="match status" value="1"/>
</dbReference>
<sequence>MQTIALAVIGGTGVYTLSQLDDVQVYEVETLYGRPSGPIRVGMLFGQRVAFFARHGEEHALPPHKINYRANIAALQQLGVSRVLALNTVGGINEAFGPRTLVCPDQLIDYTWGRVSTFCEEVGSEVLHVDFGHPYSPLLRGCLLRAARDVDVSLVEYGCYGVTQGPRLETIAEIARLRRDGCDLVGMTGMPEAALAREKGLEYACLGIVSNWAAGCGDGAEITMGEILSNVATVFRN</sequence>
<feature type="chain" id="PRO_0000184553" description="Probable S-methyl-5'-thioinosine phosphorylase">
    <location>
        <begin position="1"/>
        <end position="237"/>
    </location>
</feature>
<feature type="binding site" evidence="1">
    <location>
        <position position="12"/>
    </location>
    <ligand>
        <name>phosphate</name>
        <dbReference type="ChEBI" id="CHEBI:43474"/>
    </ligand>
</feature>
<feature type="binding site" evidence="1">
    <location>
        <begin position="54"/>
        <end position="55"/>
    </location>
    <ligand>
        <name>phosphate</name>
        <dbReference type="ChEBI" id="CHEBI:43474"/>
    </ligand>
</feature>
<feature type="binding site" evidence="1">
    <location>
        <position position="187"/>
    </location>
    <ligand>
        <name>substrate</name>
    </ligand>
</feature>
<feature type="binding site" evidence="1">
    <location>
        <position position="188"/>
    </location>
    <ligand>
        <name>phosphate</name>
        <dbReference type="ChEBI" id="CHEBI:43474"/>
    </ligand>
</feature>
<feature type="binding site" evidence="1">
    <location>
        <begin position="211"/>
        <end position="213"/>
    </location>
    <ligand>
        <name>substrate</name>
    </ligand>
</feature>
<feature type="site" description="Important for substrate specificity" evidence="1">
    <location>
        <position position="169"/>
    </location>
</feature>
<feature type="site" description="Important for substrate specificity" evidence="1">
    <location>
        <position position="224"/>
    </location>
</feature>